<dbReference type="EC" id="1.3.1.9" evidence="1"/>
<dbReference type="EMBL" id="CP000851">
    <property type="protein sequence ID" value="ABV87996.1"/>
    <property type="molecule type" value="Genomic_DNA"/>
</dbReference>
<dbReference type="RefSeq" id="WP_012155902.1">
    <property type="nucleotide sequence ID" value="NC_009901.1"/>
</dbReference>
<dbReference type="SMR" id="A8H609"/>
<dbReference type="STRING" id="398579.Spea_2676"/>
<dbReference type="KEGG" id="spl:Spea_2676"/>
<dbReference type="eggNOG" id="COG3007">
    <property type="taxonomic scope" value="Bacteria"/>
</dbReference>
<dbReference type="HOGENOM" id="CLU_057698_1_0_6"/>
<dbReference type="OrthoDB" id="9802260at2"/>
<dbReference type="UniPathway" id="UPA00094"/>
<dbReference type="Proteomes" id="UP000002608">
    <property type="component" value="Chromosome"/>
</dbReference>
<dbReference type="GO" id="GO:0004318">
    <property type="term" value="F:enoyl-[acyl-carrier-protein] reductase (NADH) activity"/>
    <property type="evidence" value="ECO:0007669"/>
    <property type="project" value="UniProtKB-UniRule"/>
</dbReference>
<dbReference type="GO" id="GO:0051287">
    <property type="term" value="F:NAD binding"/>
    <property type="evidence" value="ECO:0007669"/>
    <property type="project" value="UniProtKB-UniRule"/>
</dbReference>
<dbReference type="GO" id="GO:0050343">
    <property type="term" value="F:trans-2-enoyl-CoA reductase (NADH) activity"/>
    <property type="evidence" value="ECO:0007669"/>
    <property type="project" value="TreeGrafter"/>
</dbReference>
<dbReference type="GO" id="GO:0006633">
    <property type="term" value="P:fatty acid biosynthetic process"/>
    <property type="evidence" value="ECO:0007669"/>
    <property type="project" value="UniProtKB-UniRule"/>
</dbReference>
<dbReference type="FunFam" id="3.40.50.720:FF:000221">
    <property type="entry name" value="Enoyl-[acyl-carrier-protein] reductase [NADH]"/>
    <property type="match status" value="1"/>
</dbReference>
<dbReference type="Gene3D" id="3.40.50.720">
    <property type="entry name" value="NAD(P)-binding Rossmann-like Domain"/>
    <property type="match status" value="1"/>
</dbReference>
<dbReference type="HAMAP" id="MF_01838">
    <property type="entry name" value="FabV_reductase"/>
    <property type="match status" value="1"/>
</dbReference>
<dbReference type="InterPro" id="IPR024906">
    <property type="entry name" value="Eno_Rdtase_FAD-bd_dom"/>
</dbReference>
<dbReference type="InterPro" id="IPR024910">
    <property type="entry name" value="Enoyl-CoA_Rdtase_cat_dom"/>
</dbReference>
<dbReference type="InterPro" id="IPR050048">
    <property type="entry name" value="FabV-like_NADH_b"/>
</dbReference>
<dbReference type="InterPro" id="IPR010758">
    <property type="entry name" value="Trans-2-enoyl-CoA_reductase"/>
</dbReference>
<dbReference type="NCBIfam" id="NF043048">
    <property type="entry name" value="EnoyACPredFabV"/>
    <property type="match status" value="1"/>
</dbReference>
<dbReference type="NCBIfam" id="NF010177">
    <property type="entry name" value="PRK13656.1"/>
    <property type="match status" value="1"/>
</dbReference>
<dbReference type="PANTHER" id="PTHR37480">
    <property type="entry name" value="ENOYL-[ACYL-CARRIER-PROTEIN] REDUCTASE [NADH]"/>
    <property type="match status" value="1"/>
</dbReference>
<dbReference type="PANTHER" id="PTHR37480:SF1">
    <property type="entry name" value="ENOYL-[ACYL-CARRIER-PROTEIN] REDUCTASE [NADH]"/>
    <property type="match status" value="1"/>
</dbReference>
<dbReference type="Pfam" id="PF07055">
    <property type="entry name" value="Eno-Rase_FAD_bd"/>
    <property type="match status" value="1"/>
</dbReference>
<dbReference type="Pfam" id="PF12242">
    <property type="entry name" value="Eno-Rase_NADH_b"/>
    <property type="match status" value="1"/>
</dbReference>
<dbReference type="Pfam" id="PF12241">
    <property type="entry name" value="Enoyl_reductase"/>
    <property type="match status" value="1"/>
</dbReference>
<organism>
    <name type="scientific">Shewanella pealeana (strain ATCC 700345 / ANG-SQ1)</name>
    <dbReference type="NCBI Taxonomy" id="398579"/>
    <lineage>
        <taxon>Bacteria</taxon>
        <taxon>Pseudomonadati</taxon>
        <taxon>Pseudomonadota</taxon>
        <taxon>Gammaproteobacteria</taxon>
        <taxon>Alteromonadales</taxon>
        <taxon>Shewanellaceae</taxon>
        <taxon>Shewanella</taxon>
    </lineage>
</organism>
<accession>A8H609</accession>
<name>FABV_SHEPA</name>
<proteinExistence type="inferred from homology"/>
<sequence length="400" mass="43966">MIIKPRIRGFICTTTHPVGCEANVLEQINFTKAKGKIANGPKKVLVVGSSSGYGLSSRITAAFGSDAATLGVFFEKPSTETKPGTAGWYNSAAFDKFAKAEGLYSKSINCDAFSHEAKQKAIELIKQDLGQVDMVVYSLASPVRKMPDSGELIRSSLKPIGETYTATAVDTNKDLIIEASVEPATEQEIADTVTVMGGEDWELWMQALSEAGVLSDNCKTVAYSYIGTELTWPIYWHGALGKAKMDLDRAAHALNTKLSVTGGSANVAVLKSVVTQASSAIPVMPLYIAMVFKKMRAEGLHEGCIEQISRMFNERLFKADGTAADVDESNRLRLDDWELREEIQQHCRDMWPQVTTENLAELTDYREYKEEFLKLFGFGVEGIDYEADVNPHVEFDVVSI</sequence>
<comment type="function">
    <text evidence="1">Involved in the final reduction of the elongation cycle of fatty acid synthesis (FAS II). Catalyzes the reduction of a carbon-carbon double bond in an enoyl moiety that is covalently linked to an acyl carrier protein (ACP).</text>
</comment>
<comment type="catalytic activity">
    <reaction evidence="1">
        <text>a 2,3-saturated acyl-[ACP] + NAD(+) = a (2E)-enoyl-[ACP] + NADH + H(+)</text>
        <dbReference type="Rhea" id="RHEA:10240"/>
        <dbReference type="Rhea" id="RHEA-COMP:9925"/>
        <dbReference type="Rhea" id="RHEA-COMP:9926"/>
        <dbReference type="ChEBI" id="CHEBI:15378"/>
        <dbReference type="ChEBI" id="CHEBI:57540"/>
        <dbReference type="ChEBI" id="CHEBI:57945"/>
        <dbReference type="ChEBI" id="CHEBI:78784"/>
        <dbReference type="ChEBI" id="CHEBI:78785"/>
        <dbReference type="EC" id="1.3.1.9"/>
    </reaction>
</comment>
<comment type="pathway">
    <text evidence="1">Lipid metabolism; fatty acid biosynthesis.</text>
</comment>
<comment type="subunit">
    <text evidence="1">Monomer.</text>
</comment>
<comment type="similarity">
    <text evidence="1">Belongs to the TER reductase family.</text>
</comment>
<keyword id="KW-0275">Fatty acid biosynthesis</keyword>
<keyword id="KW-0276">Fatty acid metabolism</keyword>
<keyword id="KW-0444">Lipid biosynthesis</keyword>
<keyword id="KW-0443">Lipid metabolism</keyword>
<keyword id="KW-0520">NAD</keyword>
<keyword id="KW-0560">Oxidoreductase</keyword>
<keyword id="KW-1185">Reference proteome</keyword>
<protein>
    <recommendedName>
        <fullName evidence="1">Enoyl-[acyl-carrier-protein] reductase [NADH]</fullName>
        <shortName evidence="1">ENR</shortName>
        <ecNumber evidence="1">1.3.1.9</ecNumber>
    </recommendedName>
</protein>
<feature type="chain" id="PRO_1000088457" description="Enoyl-[acyl-carrier-protein] reductase [NADH]">
    <location>
        <begin position="1"/>
        <end position="400"/>
    </location>
</feature>
<feature type="active site" description="Proton donor" evidence="1">
    <location>
        <position position="235"/>
    </location>
</feature>
<feature type="binding site" evidence="1">
    <location>
        <begin position="48"/>
        <end position="53"/>
    </location>
    <ligand>
        <name>NAD(+)</name>
        <dbReference type="ChEBI" id="CHEBI:57540"/>
    </ligand>
</feature>
<feature type="binding site" evidence="1">
    <location>
        <begin position="74"/>
        <end position="75"/>
    </location>
    <ligand>
        <name>NAD(+)</name>
        <dbReference type="ChEBI" id="CHEBI:57540"/>
    </ligand>
</feature>
<feature type="binding site" evidence="1">
    <location>
        <begin position="111"/>
        <end position="112"/>
    </location>
    <ligand>
        <name>NAD(+)</name>
        <dbReference type="ChEBI" id="CHEBI:57540"/>
    </ligand>
</feature>
<feature type="binding site" evidence="1">
    <location>
        <begin position="139"/>
        <end position="140"/>
    </location>
    <ligand>
        <name>NAD(+)</name>
        <dbReference type="ChEBI" id="CHEBI:57540"/>
    </ligand>
</feature>
<feature type="binding site" evidence="1">
    <location>
        <position position="225"/>
    </location>
    <ligand>
        <name>substrate</name>
    </ligand>
</feature>
<feature type="binding site" evidence="1">
    <location>
        <position position="244"/>
    </location>
    <ligand>
        <name>NAD(+)</name>
        <dbReference type="ChEBI" id="CHEBI:57540"/>
    </ligand>
</feature>
<feature type="binding site" evidence="1">
    <location>
        <begin position="273"/>
        <end position="275"/>
    </location>
    <ligand>
        <name>NAD(+)</name>
        <dbReference type="ChEBI" id="CHEBI:57540"/>
    </ligand>
</feature>
<feature type="site" description="Plays an important role in discriminating NADH against NADPH" evidence="1">
    <location>
        <position position="75"/>
    </location>
</feature>
<reference key="1">
    <citation type="submission" date="2007-10" db="EMBL/GenBank/DDBJ databases">
        <title>Complete sequence of Shewanella pealeana ATCC 700345.</title>
        <authorList>
            <consortium name="US DOE Joint Genome Institute"/>
            <person name="Copeland A."/>
            <person name="Lucas S."/>
            <person name="Lapidus A."/>
            <person name="Barry K."/>
            <person name="Glavina del Rio T."/>
            <person name="Dalin E."/>
            <person name="Tice H."/>
            <person name="Pitluck S."/>
            <person name="Chertkov O."/>
            <person name="Brettin T."/>
            <person name="Bruce D."/>
            <person name="Detter J.C."/>
            <person name="Han C."/>
            <person name="Schmutz J."/>
            <person name="Larimer F."/>
            <person name="Land M."/>
            <person name="Hauser L."/>
            <person name="Kyrpides N."/>
            <person name="Kim E."/>
            <person name="Zhao J.-S.Z."/>
            <person name="Manno D."/>
            <person name="Hawari J."/>
            <person name="Richardson P."/>
        </authorList>
    </citation>
    <scope>NUCLEOTIDE SEQUENCE [LARGE SCALE GENOMIC DNA]</scope>
    <source>
        <strain>ATCC 700345 / ANG-SQ1</strain>
    </source>
</reference>
<gene>
    <name evidence="1" type="primary">fabV</name>
    <name type="ordered locus">Spea_2676</name>
</gene>
<evidence type="ECO:0000255" key="1">
    <source>
        <dbReference type="HAMAP-Rule" id="MF_01838"/>
    </source>
</evidence>